<dbReference type="EC" id="6.3.2.6" evidence="1"/>
<dbReference type="EMBL" id="CP000720">
    <property type="protein sequence ID" value="ABS46724.1"/>
    <property type="molecule type" value="Genomic_DNA"/>
</dbReference>
<dbReference type="RefSeq" id="WP_002208555.1">
    <property type="nucleotide sequence ID" value="NC_009708.1"/>
</dbReference>
<dbReference type="SMR" id="A7FG51"/>
<dbReference type="GeneID" id="57975643"/>
<dbReference type="KEGG" id="ypi:YpsIP31758_1249"/>
<dbReference type="HOGENOM" id="CLU_061495_2_0_6"/>
<dbReference type="UniPathway" id="UPA00074">
    <property type="reaction ID" value="UER00131"/>
</dbReference>
<dbReference type="Proteomes" id="UP000002412">
    <property type="component" value="Chromosome"/>
</dbReference>
<dbReference type="GO" id="GO:0005829">
    <property type="term" value="C:cytosol"/>
    <property type="evidence" value="ECO:0007669"/>
    <property type="project" value="TreeGrafter"/>
</dbReference>
<dbReference type="GO" id="GO:0005524">
    <property type="term" value="F:ATP binding"/>
    <property type="evidence" value="ECO:0007669"/>
    <property type="project" value="UniProtKB-KW"/>
</dbReference>
<dbReference type="GO" id="GO:0004639">
    <property type="term" value="F:phosphoribosylaminoimidazolesuccinocarboxamide synthase activity"/>
    <property type="evidence" value="ECO:0007669"/>
    <property type="project" value="UniProtKB-UniRule"/>
</dbReference>
<dbReference type="GO" id="GO:0006189">
    <property type="term" value="P:'de novo' IMP biosynthetic process"/>
    <property type="evidence" value="ECO:0007669"/>
    <property type="project" value="UniProtKB-UniRule"/>
</dbReference>
<dbReference type="GO" id="GO:0009236">
    <property type="term" value="P:cobalamin biosynthetic process"/>
    <property type="evidence" value="ECO:0007669"/>
    <property type="project" value="InterPro"/>
</dbReference>
<dbReference type="CDD" id="cd01415">
    <property type="entry name" value="SAICAR_synt_PurC"/>
    <property type="match status" value="1"/>
</dbReference>
<dbReference type="FunFam" id="3.30.200.20:FF:000086">
    <property type="entry name" value="Phosphoribosylaminoimidazole-succinocarboxamide synthase"/>
    <property type="match status" value="1"/>
</dbReference>
<dbReference type="FunFam" id="3.30.470.20:FF:000006">
    <property type="entry name" value="Phosphoribosylaminoimidazole-succinocarboxamide synthase"/>
    <property type="match status" value="1"/>
</dbReference>
<dbReference type="Gene3D" id="3.30.470.20">
    <property type="entry name" value="ATP-grasp fold, B domain"/>
    <property type="match status" value="1"/>
</dbReference>
<dbReference type="Gene3D" id="3.30.200.20">
    <property type="entry name" value="Phosphorylase Kinase, domain 1"/>
    <property type="match status" value="1"/>
</dbReference>
<dbReference type="HAMAP" id="MF_00137">
    <property type="entry name" value="SAICAR_synth"/>
    <property type="match status" value="1"/>
</dbReference>
<dbReference type="InterPro" id="IPR028923">
    <property type="entry name" value="SAICAR_synt/ADE2_N"/>
</dbReference>
<dbReference type="InterPro" id="IPR033934">
    <property type="entry name" value="SAICAR_synt_PurC"/>
</dbReference>
<dbReference type="InterPro" id="IPR001636">
    <property type="entry name" value="SAICAR_synth"/>
</dbReference>
<dbReference type="InterPro" id="IPR050089">
    <property type="entry name" value="SAICAR_synthetase"/>
</dbReference>
<dbReference type="InterPro" id="IPR018236">
    <property type="entry name" value="SAICAR_synthetase_CS"/>
</dbReference>
<dbReference type="NCBIfam" id="TIGR00081">
    <property type="entry name" value="purC"/>
    <property type="match status" value="1"/>
</dbReference>
<dbReference type="PANTHER" id="PTHR43599">
    <property type="entry name" value="MULTIFUNCTIONAL PROTEIN ADE2"/>
    <property type="match status" value="1"/>
</dbReference>
<dbReference type="PANTHER" id="PTHR43599:SF3">
    <property type="entry name" value="SI:DKEY-6E2.2"/>
    <property type="match status" value="1"/>
</dbReference>
<dbReference type="Pfam" id="PF01259">
    <property type="entry name" value="SAICAR_synt"/>
    <property type="match status" value="1"/>
</dbReference>
<dbReference type="SUPFAM" id="SSF56104">
    <property type="entry name" value="SAICAR synthase-like"/>
    <property type="match status" value="1"/>
</dbReference>
<dbReference type="PROSITE" id="PS01057">
    <property type="entry name" value="SAICAR_SYNTHETASE_1"/>
    <property type="match status" value="1"/>
</dbReference>
<dbReference type="PROSITE" id="PS01058">
    <property type="entry name" value="SAICAR_SYNTHETASE_2"/>
    <property type="match status" value="1"/>
</dbReference>
<evidence type="ECO:0000255" key="1">
    <source>
        <dbReference type="HAMAP-Rule" id="MF_00137"/>
    </source>
</evidence>
<accession>A7FG51</accession>
<organism>
    <name type="scientific">Yersinia pseudotuberculosis serotype O:1b (strain IP 31758)</name>
    <dbReference type="NCBI Taxonomy" id="349747"/>
    <lineage>
        <taxon>Bacteria</taxon>
        <taxon>Pseudomonadati</taxon>
        <taxon>Pseudomonadota</taxon>
        <taxon>Gammaproteobacteria</taxon>
        <taxon>Enterobacterales</taxon>
        <taxon>Yersiniaceae</taxon>
        <taxon>Yersinia</taxon>
    </lineage>
</organism>
<protein>
    <recommendedName>
        <fullName evidence="1">Phosphoribosylaminoimidazole-succinocarboxamide synthase</fullName>
        <ecNumber evidence="1">6.3.2.6</ecNumber>
    </recommendedName>
    <alternativeName>
        <fullName evidence="1">SAICAR synthetase</fullName>
    </alternativeName>
</protein>
<keyword id="KW-0067">ATP-binding</keyword>
<keyword id="KW-0436">Ligase</keyword>
<keyword id="KW-0547">Nucleotide-binding</keyword>
<keyword id="KW-0658">Purine biosynthesis</keyword>
<feature type="chain" id="PRO_1000057890" description="Phosphoribosylaminoimidazole-succinocarboxamide synthase">
    <location>
        <begin position="1"/>
        <end position="237"/>
    </location>
</feature>
<comment type="catalytic activity">
    <reaction evidence="1">
        <text>5-amino-1-(5-phospho-D-ribosyl)imidazole-4-carboxylate + L-aspartate + ATP = (2S)-2-[5-amino-1-(5-phospho-beta-D-ribosyl)imidazole-4-carboxamido]succinate + ADP + phosphate + 2 H(+)</text>
        <dbReference type="Rhea" id="RHEA:22628"/>
        <dbReference type="ChEBI" id="CHEBI:15378"/>
        <dbReference type="ChEBI" id="CHEBI:29991"/>
        <dbReference type="ChEBI" id="CHEBI:30616"/>
        <dbReference type="ChEBI" id="CHEBI:43474"/>
        <dbReference type="ChEBI" id="CHEBI:58443"/>
        <dbReference type="ChEBI" id="CHEBI:77657"/>
        <dbReference type="ChEBI" id="CHEBI:456216"/>
        <dbReference type="EC" id="6.3.2.6"/>
    </reaction>
</comment>
<comment type="pathway">
    <text evidence="1">Purine metabolism; IMP biosynthesis via de novo pathway; 5-amino-1-(5-phospho-D-ribosyl)imidazole-4-carboxamide from 5-amino-1-(5-phospho-D-ribosyl)imidazole-4-carboxylate: step 1/2.</text>
</comment>
<comment type="similarity">
    <text evidence="1">Belongs to the SAICAR synthetase family.</text>
</comment>
<reference key="1">
    <citation type="journal article" date="2007" name="PLoS Genet.">
        <title>The complete genome sequence of Yersinia pseudotuberculosis IP31758, the causative agent of Far East scarlet-like fever.</title>
        <authorList>
            <person name="Eppinger M."/>
            <person name="Rosovitz M.J."/>
            <person name="Fricke W.F."/>
            <person name="Rasko D.A."/>
            <person name="Kokorina G."/>
            <person name="Fayolle C."/>
            <person name="Lindler L.E."/>
            <person name="Carniel E."/>
            <person name="Ravel J."/>
        </authorList>
    </citation>
    <scope>NUCLEOTIDE SEQUENCE [LARGE SCALE GENOMIC DNA]</scope>
    <source>
        <strain>IP 31758</strain>
    </source>
</reference>
<proteinExistence type="inferred from homology"/>
<sequence>MQKLAELYRGKAKTVYTTENPDLLVLEFRNDTSALDGQRIEQFDRKGMVNNKFNHFIMTKLEEAGIPTQMERLLSDTEVLVKKLEMIPVECVIRNRAAGSLVKRLGIEEGLSLNPPLFDLFLKNDAMHDPMVNESYCKTFGWATEAQLARMKELSYLANDVLSKLFDDAGLILVDFKLEFGLFNGEVVLGDEFSPDGSRLWDKKTLNKMDKDRYRQSLGGLIEAYEEVAHRIGVKLD</sequence>
<gene>
    <name evidence="1" type="primary">purC</name>
    <name type="ordered locus">YpsIP31758_1249</name>
</gene>
<name>PUR7_YERP3</name>